<dbReference type="EMBL" id="CP000227">
    <property type="protein sequence ID" value="ACM10533.1"/>
    <property type="molecule type" value="Genomic_DNA"/>
</dbReference>
<dbReference type="SMR" id="B9IYH1"/>
<dbReference type="KEGG" id="bcq:BCQ_0004"/>
<dbReference type="HOGENOM" id="CLU_040267_0_1_9"/>
<dbReference type="Proteomes" id="UP000000441">
    <property type="component" value="Chromosome"/>
</dbReference>
<dbReference type="GO" id="GO:0005737">
    <property type="term" value="C:cytoplasm"/>
    <property type="evidence" value="ECO:0007669"/>
    <property type="project" value="UniProtKB-SubCell"/>
</dbReference>
<dbReference type="GO" id="GO:0005524">
    <property type="term" value="F:ATP binding"/>
    <property type="evidence" value="ECO:0007669"/>
    <property type="project" value="UniProtKB-UniRule"/>
</dbReference>
<dbReference type="GO" id="GO:0003697">
    <property type="term" value="F:single-stranded DNA binding"/>
    <property type="evidence" value="ECO:0007669"/>
    <property type="project" value="UniProtKB-UniRule"/>
</dbReference>
<dbReference type="GO" id="GO:0006260">
    <property type="term" value="P:DNA replication"/>
    <property type="evidence" value="ECO:0007669"/>
    <property type="project" value="UniProtKB-UniRule"/>
</dbReference>
<dbReference type="GO" id="GO:0000731">
    <property type="term" value="P:DNA synthesis involved in DNA repair"/>
    <property type="evidence" value="ECO:0007669"/>
    <property type="project" value="TreeGrafter"/>
</dbReference>
<dbReference type="GO" id="GO:0006302">
    <property type="term" value="P:double-strand break repair"/>
    <property type="evidence" value="ECO:0007669"/>
    <property type="project" value="TreeGrafter"/>
</dbReference>
<dbReference type="GO" id="GO:0009432">
    <property type="term" value="P:SOS response"/>
    <property type="evidence" value="ECO:0007669"/>
    <property type="project" value="UniProtKB-UniRule"/>
</dbReference>
<dbReference type="CDD" id="cd03242">
    <property type="entry name" value="ABC_RecF"/>
    <property type="match status" value="1"/>
</dbReference>
<dbReference type="FunFam" id="1.20.1050.90:FF:000002">
    <property type="entry name" value="DNA replication and repair protein RecF"/>
    <property type="match status" value="1"/>
</dbReference>
<dbReference type="FunFam" id="3.40.50.300:FF:000400">
    <property type="entry name" value="DNA replication and repair protein RecF"/>
    <property type="match status" value="1"/>
</dbReference>
<dbReference type="Gene3D" id="3.40.50.300">
    <property type="entry name" value="P-loop containing nucleotide triphosphate hydrolases"/>
    <property type="match status" value="1"/>
</dbReference>
<dbReference type="Gene3D" id="1.20.1050.90">
    <property type="entry name" value="RecF/RecN/SMC, N-terminal domain"/>
    <property type="match status" value="1"/>
</dbReference>
<dbReference type="HAMAP" id="MF_00365">
    <property type="entry name" value="RecF"/>
    <property type="match status" value="1"/>
</dbReference>
<dbReference type="InterPro" id="IPR001238">
    <property type="entry name" value="DNA-binding_RecF"/>
</dbReference>
<dbReference type="InterPro" id="IPR018078">
    <property type="entry name" value="DNA-binding_RecF_CS"/>
</dbReference>
<dbReference type="InterPro" id="IPR027417">
    <property type="entry name" value="P-loop_NTPase"/>
</dbReference>
<dbReference type="InterPro" id="IPR003395">
    <property type="entry name" value="RecF/RecN/SMC_N"/>
</dbReference>
<dbReference type="InterPro" id="IPR042174">
    <property type="entry name" value="RecF_2"/>
</dbReference>
<dbReference type="NCBIfam" id="TIGR00611">
    <property type="entry name" value="recf"/>
    <property type="match status" value="1"/>
</dbReference>
<dbReference type="PANTHER" id="PTHR32182">
    <property type="entry name" value="DNA REPLICATION AND REPAIR PROTEIN RECF"/>
    <property type="match status" value="1"/>
</dbReference>
<dbReference type="PANTHER" id="PTHR32182:SF0">
    <property type="entry name" value="DNA REPLICATION AND REPAIR PROTEIN RECF"/>
    <property type="match status" value="1"/>
</dbReference>
<dbReference type="Pfam" id="PF02463">
    <property type="entry name" value="SMC_N"/>
    <property type="match status" value="1"/>
</dbReference>
<dbReference type="SUPFAM" id="SSF52540">
    <property type="entry name" value="P-loop containing nucleoside triphosphate hydrolases"/>
    <property type="match status" value="1"/>
</dbReference>
<dbReference type="PROSITE" id="PS00617">
    <property type="entry name" value="RECF_1"/>
    <property type="match status" value="1"/>
</dbReference>
<dbReference type="PROSITE" id="PS00618">
    <property type="entry name" value="RECF_2"/>
    <property type="match status" value="1"/>
</dbReference>
<accession>B9IYH1</accession>
<reference key="1">
    <citation type="journal article" date="2009" name="J. Bacteriol.">
        <title>Complete genome sequence of the extremophilic Bacillus cereus strain Q1 with industrial applications.</title>
        <authorList>
            <person name="Xiong Z."/>
            <person name="Jiang Y."/>
            <person name="Qi D."/>
            <person name="Lu H."/>
            <person name="Yang F."/>
            <person name="Yang J."/>
            <person name="Chen L."/>
            <person name="Sun L."/>
            <person name="Xu X."/>
            <person name="Xue Y."/>
            <person name="Zhu Y."/>
            <person name="Jin Q."/>
        </authorList>
    </citation>
    <scope>NUCLEOTIDE SEQUENCE [LARGE SCALE GENOMIC DNA]</scope>
    <source>
        <strain>Q1</strain>
    </source>
</reference>
<gene>
    <name evidence="1" type="primary">recF</name>
    <name type="ordered locus">BCQ_0004</name>
</gene>
<protein>
    <recommendedName>
        <fullName evidence="1">DNA replication and repair protein RecF</fullName>
    </recommendedName>
</protein>
<evidence type="ECO:0000255" key="1">
    <source>
        <dbReference type="HAMAP-Rule" id="MF_00365"/>
    </source>
</evidence>
<keyword id="KW-0067">ATP-binding</keyword>
<keyword id="KW-0963">Cytoplasm</keyword>
<keyword id="KW-0227">DNA damage</keyword>
<keyword id="KW-0234">DNA repair</keyword>
<keyword id="KW-0235">DNA replication</keyword>
<keyword id="KW-0238">DNA-binding</keyword>
<keyword id="KW-0547">Nucleotide-binding</keyword>
<keyword id="KW-0742">SOS response</keyword>
<feature type="chain" id="PRO_1000133674" description="DNA replication and repair protein RecF">
    <location>
        <begin position="1"/>
        <end position="375"/>
    </location>
</feature>
<feature type="binding site" evidence="1">
    <location>
        <begin position="30"/>
        <end position="37"/>
    </location>
    <ligand>
        <name>ATP</name>
        <dbReference type="ChEBI" id="CHEBI:30616"/>
    </ligand>
</feature>
<name>RECF_BACCQ</name>
<comment type="function">
    <text evidence="1">The RecF protein is involved in DNA metabolism; it is required for DNA replication and normal SOS inducibility. RecF binds preferentially to single-stranded, linear DNA. It also seems to bind ATP.</text>
</comment>
<comment type="subcellular location">
    <subcellularLocation>
        <location evidence="1">Cytoplasm</location>
    </subcellularLocation>
</comment>
<comment type="similarity">
    <text evidence="1">Belongs to the RecF family.</text>
</comment>
<sequence>MFISEIQLKNYRNYEKLELSFEDKVNVIIGENAQGKTNLMEAIYVLAMAKSHRTSNDRELIRWDEDFGQIKGKLQKRNSSLSLELNISKKGKKAKLNQLEQQKLSQYIGVMNVVMFAPEDLNLVKGSPQVRRRFLDMELGQIAPVYLYELSQYQKVLTQRNHLLKKMQGNSKNEETMLDVFTLQLIEHGTKILQKRFEFLHLLQEWAAPIHRGISRGLEELEIVYKPSVDVSESMDLSKIKEVYYESFQSVKQREIFRGTTLIGPHRDDLQFFVNSKNVQVFGSQGQQRTTALSLKLAEIELIYSEVKEYPILLLDDVLSELDDYRQSHLLNTIQGKVQTFVTTTSVDGIEHETLKEAKTIHVTNGTVDCEIDRA</sequence>
<proteinExistence type="inferred from homology"/>
<organism>
    <name type="scientific">Bacillus cereus (strain Q1)</name>
    <dbReference type="NCBI Taxonomy" id="361100"/>
    <lineage>
        <taxon>Bacteria</taxon>
        <taxon>Bacillati</taxon>
        <taxon>Bacillota</taxon>
        <taxon>Bacilli</taxon>
        <taxon>Bacillales</taxon>
        <taxon>Bacillaceae</taxon>
        <taxon>Bacillus</taxon>
        <taxon>Bacillus cereus group</taxon>
    </lineage>
</organism>